<evidence type="ECO:0000255" key="1">
    <source>
        <dbReference type="HAMAP-Rule" id="MF_01374"/>
    </source>
</evidence>
<comment type="function">
    <text evidence="1">Thiolesterase that catalyzes the hydrolysis of S-D-lactoyl-glutathione to form glutathione and D-lactic acid.</text>
</comment>
<comment type="catalytic activity">
    <reaction evidence="1">
        <text>an S-(2-hydroxyacyl)glutathione + H2O = a 2-hydroxy carboxylate + glutathione + H(+)</text>
        <dbReference type="Rhea" id="RHEA:21864"/>
        <dbReference type="ChEBI" id="CHEBI:15377"/>
        <dbReference type="ChEBI" id="CHEBI:15378"/>
        <dbReference type="ChEBI" id="CHEBI:57925"/>
        <dbReference type="ChEBI" id="CHEBI:58896"/>
        <dbReference type="ChEBI" id="CHEBI:71261"/>
        <dbReference type="EC" id="3.1.2.6"/>
    </reaction>
</comment>
<comment type="cofactor">
    <cofactor evidence="1">
        <name>Zn(2+)</name>
        <dbReference type="ChEBI" id="CHEBI:29105"/>
    </cofactor>
    <text evidence="1">Binds 2 Zn(2+) ions per subunit.</text>
</comment>
<comment type="pathway">
    <text evidence="1">Secondary metabolite metabolism; methylglyoxal degradation; (R)-lactate from methylglyoxal: step 2/2.</text>
</comment>
<comment type="subunit">
    <text evidence="1">Monomer.</text>
</comment>
<comment type="similarity">
    <text evidence="1">Belongs to the metallo-beta-lactamase superfamily. Glyoxalase II family.</text>
</comment>
<sequence>MEQRLEIEQFICRSDNYGVLIHDPESALTATIDAPDAYAIEAALERRGWTLDFIFTTHHHLDHVEGNEPLKEKFGVSIIGPEAEKAKIPGIDRTVKGGDEFTFGLFKVKVISTPGHTAGGISYYLPDAKVVFTGDTLFALGCGRLFEGTPATMFHSLEKLVALPGDTALYCGHEYTQNNARFALTIDPDNSALKERAKEIARLRAHERMTLPSTIALEMATNPFLRWHDRTIRARLGLQDAPDEAVFAEIRKRKDMF</sequence>
<reference key="1">
    <citation type="journal article" date="2005" name="Infect. Immun.">
        <title>Whole-genome analyses of speciation events in pathogenic Brucellae.</title>
        <authorList>
            <person name="Chain P.S."/>
            <person name="Comerci D.J."/>
            <person name="Tolmasky M.E."/>
            <person name="Larimer F.W."/>
            <person name="Malfatti S.A."/>
            <person name="Vergez L.M."/>
            <person name="Aguero F."/>
            <person name="Land M.L."/>
            <person name="Ugalde R.A."/>
            <person name="Garcia E."/>
        </authorList>
    </citation>
    <scope>NUCLEOTIDE SEQUENCE [LARGE SCALE GENOMIC DNA]</scope>
    <source>
        <strain>2308</strain>
    </source>
</reference>
<protein>
    <recommendedName>
        <fullName evidence="1">Hydroxyacylglutathione hydrolase</fullName>
        <ecNumber evidence="1">3.1.2.6</ecNumber>
    </recommendedName>
    <alternativeName>
        <fullName evidence="1">Glyoxalase II</fullName>
        <shortName evidence="1">Glx II</shortName>
    </alternativeName>
</protein>
<feature type="chain" id="PRO_0000309632" description="Hydroxyacylglutathione hydrolase">
    <location>
        <begin position="1"/>
        <end position="257"/>
    </location>
</feature>
<feature type="binding site" evidence="1">
    <location>
        <position position="58"/>
    </location>
    <ligand>
        <name>Zn(2+)</name>
        <dbReference type="ChEBI" id="CHEBI:29105"/>
        <label>1</label>
    </ligand>
</feature>
<feature type="binding site" evidence="1">
    <location>
        <position position="60"/>
    </location>
    <ligand>
        <name>Zn(2+)</name>
        <dbReference type="ChEBI" id="CHEBI:29105"/>
        <label>1</label>
    </ligand>
</feature>
<feature type="binding site" evidence="1">
    <location>
        <position position="62"/>
    </location>
    <ligand>
        <name>Zn(2+)</name>
        <dbReference type="ChEBI" id="CHEBI:29105"/>
        <label>2</label>
    </ligand>
</feature>
<feature type="binding site" evidence="1">
    <location>
        <position position="63"/>
    </location>
    <ligand>
        <name>Zn(2+)</name>
        <dbReference type="ChEBI" id="CHEBI:29105"/>
        <label>2</label>
    </ligand>
</feature>
<feature type="binding site" evidence="1">
    <location>
        <position position="116"/>
    </location>
    <ligand>
        <name>Zn(2+)</name>
        <dbReference type="ChEBI" id="CHEBI:29105"/>
        <label>1</label>
    </ligand>
</feature>
<feature type="binding site" evidence="1">
    <location>
        <position position="135"/>
    </location>
    <ligand>
        <name>Zn(2+)</name>
        <dbReference type="ChEBI" id="CHEBI:29105"/>
        <label>1</label>
    </ligand>
</feature>
<feature type="binding site" evidence="1">
    <location>
        <position position="135"/>
    </location>
    <ligand>
        <name>Zn(2+)</name>
        <dbReference type="ChEBI" id="CHEBI:29105"/>
        <label>2</label>
    </ligand>
</feature>
<feature type="binding site" evidence="1">
    <location>
        <position position="173"/>
    </location>
    <ligand>
        <name>Zn(2+)</name>
        <dbReference type="ChEBI" id="CHEBI:29105"/>
        <label>2</label>
    </ligand>
</feature>
<keyword id="KW-0378">Hydrolase</keyword>
<keyword id="KW-0479">Metal-binding</keyword>
<keyword id="KW-1185">Reference proteome</keyword>
<keyword id="KW-0862">Zinc</keyword>
<organism>
    <name type="scientific">Brucella abortus (strain 2308)</name>
    <dbReference type="NCBI Taxonomy" id="359391"/>
    <lineage>
        <taxon>Bacteria</taxon>
        <taxon>Pseudomonadati</taxon>
        <taxon>Pseudomonadota</taxon>
        <taxon>Alphaproteobacteria</taxon>
        <taxon>Hyphomicrobiales</taxon>
        <taxon>Brucellaceae</taxon>
        <taxon>Brucella/Ochrobactrum group</taxon>
        <taxon>Brucella</taxon>
    </lineage>
</organism>
<proteinExistence type="inferred from homology"/>
<name>GLO2_BRUA2</name>
<gene>
    <name evidence="1" type="primary">gloB</name>
    <name type="ordered locus">BAB1_1936</name>
</gene>
<accession>Q2YLU8</accession>
<dbReference type="EC" id="3.1.2.6" evidence="1"/>
<dbReference type="EMBL" id="AM040264">
    <property type="protein sequence ID" value="CAJ11892.1"/>
    <property type="molecule type" value="Genomic_DNA"/>
</dbReference>
<dbReference type="SMR" id="Q2YLU8"/>
<dbReference type="STRING" id="359391.BAB1_1936"/>
<dbReference type="KEGG" id="bmf:BAB1_1936"/>
<dbReference type="HOGENOM" id="CLU_030571_4_1_5"/>
<dbReference type="UniPathway" id="UPA00619">
    <property type="reaction ID" value="UER00676"/>
</dbReference>
<dbReference type="Proteomes" id="UP000002719">
    <property type="component" value="Chromosome I"/>
</dbReference>
<dbReference type="GO" id="GO:0004416">
    <property type="term" value="F:hydroxyacylglutathione hydrolase activity"/>
    <property type="evidence" value="ECO:0007669"/>
    <property type="project" value="UniProtKB-UniRule"/>
</dbReference>
<dbReference type="GO" id="GO:0046872">
    <property type="term" value="F:metal ion binding"/>
    <property type="evidence" value="ECO:0007669"/>
    <property type="project" value="UniProtKB-KW"/>
</dbReference>
<dbReference type="GO" id="GO:0019243">
    <property type="term" value="P:methylglyoxal catabolic process to D-lactate via S-lactoyl-glutathione"/>
    <property type="evidence" value="ECO:0007669"/>
    <property type="project" value="InterPro"/>
</dbReference>
<dbReference type="CDD" id="cd07723">
    <property type="entry name" value="hydroxyacylglutathione_hydrolase_MBL-fold"/>
    <property type="match status" value="1"/>
</dbReference>
<dbReference type="Gene3D" id="3.60.15.10">
    <property type="entry name" value="Ribonuclease Z/Hydroxyacylglutathione hydrolase-like"/>
    <property type="match status" value="1"/>
</dbReference>
<dbReference type="HAMAP" id="MF_01374">
    <property type="entry name" value="Glyoxalase_2"/>
    <property type="match status" value="1"/>
</dbReference>
<dbReference type="InterPro" id="IPR035680">
    <property type="entry name" value="Clx_II_MBL"/>
</dbReference>
<dbReference type="InterPro" id="IPR050110">
    <property type="entry name" value="Glyoxalase_II_hydrolase"/>
</dbReference>
<dbReference type="InterPro" id="IPR032282">
    <property type="entry name" value="HAGH_C"/>
</dbReference>
<dbReference type="InterPro" id="IPR017782">
    <property type="entry name" value="Hydroxyacylglutathione_Hdrlase"/>
</dbReference>
<dbReference type="InterPro" id="IPR001279">
    <property type="entry name" value="Metallo-B-lactamas"/>
</dbReference>
<dbReference type="InterPro" id="IPR036866">
    <property type="entry name" value="RibonucZ/Hydroxyglut_hydro"/>
</dbReference>
<dbReference type="NCBIfam" id="TIGR03413">
    <property type="entry name" value="GSH_gloB"/>
    <property type="match status" value="1"/>
</dbReference>
<dbReference type="PANTHER" id="PTHR43705">
    <property type="entry name" value="HYDROXYACYLGLUTATHIONE HYDROLASE"/>
    <property type="match status" value="1"/>
</dbReference>
<dbReference type="PANTHER" id="PTHR43705:SF1">
    <property type="entry name" value="HYDROXYACYLGLUTATHIONE HYDROLASE GLOB"/>
    <property type="match status" value="1"/>
</dbReference>
<dbReference type="Pfam" id="PF16123">
    <property type="entry name" value="HAGH_C"/>
    <property type="match status" value="1"/>
</dbReference>
<dbReference type="Pfam" id="PF00753">
    <property type="entry name" value="Lactamase_B"/>
    <property type="match status" value="1"/>
</dbReference>
<dbReference type="PIRSF" id="PIRSF005457">
    <property type="entry name" value="Glx"/>
    <property type="match status" value="1"/>
</dbReference>
<dbReference type="SMART" id="SM00849">
    <property type="entry name" value="Lactamase_B"/>
    <property type="match status" value="1"/>
</dbReference>
<dbReference type="SUPFAM" id="SSF56281">
    <property type="entry name" value="Metallo-hydrolase/oxidoreductase"/>
    <property type="match status" value="1"/>
</dbReference>